<gene>
    <name evidence="1" type="primary">hutI</name>
    <name type="ordered locus">CCNA_01011</name>
</gene>
<sequence>MRCDRVWINARLATLAPGRQGLGIVEDGVVACLGGRIAYAGPAAAAPTFEAAESIDVDGRWITPGLIDPHTHLVFAGDRAHEFELRLAGASYEEIARAGGGIVSTMRATRAASEAELIAAALPRLDALLAEGVTTVEIKSGYGLSLDDELKSLRAARALADIRRVGVTTTFLGAHALPPEYRDDEDGYVDLVCQTMIPAIAARGLADAVDGFCEGIGFSPAQIRRVFDAAKAHGLPVKLHAEQLSNLSGAALAAEYNALSADHLEHLDAAGIAAMAASGTVATLLPGAYYFTRETLVPPIAALRAAGVPMALATDCNPGTSPLTSPLLVMNMAATLFRMTVEECLAGVTREAARALGLLADRGTLEAGKACDLAIWDVERPAELVYRMGFNPLHARVWRGL</sequence>
<reference key="1">
    <citation type="journal article" date="2010" name="J. Bacteriol.">
        <title>The genetic basis of laboratory adaptation in Caulobacter crescentus.</title>
        <authorList>
            <person name="Marks M.E."/>
            <person name="Castro-Rojas C.M."/>
            <person name="Teiling C."/>
            <person name="Du L."/>
            <person name="Kapatral V."/>
            <person name="Walunas T.L."/>
            <person name="Crosson S."/>
        </authorList>
    </citation>
    <scope>NUCLEOTIDE SEQUENCE [LARGE SCALE GENOMIC DNA]</scope>
    <source>
        <strain>NA1000 / CB15N</strain>
    </source>
</reference>
<comment type="function">
    <text evidence="1">Catalyzes the hydrolytic cleavage of the carbon-nitrogen bond in imidazolone-5-propanoate to yield N-formimidoyl-L-glutamate. It is the third step in the universal histidine degradation pathway.</text>
</comment>
<comment type="catalytic activity">
    <reaction evidence="1">
        <text>4-imidazolone-5-propanoate + H2O = N-formimidoyl-L-glutamate</text>
        <dbReference type="Rhea" id="RHEA:23660"/>
        <dbReference type="ChEBI" id="CHEBI:15377"/>
        <dbReference type="ChEBI" id="CHEBI:58928"/>
        <dbReference type="ChEBI" id="CHEBI:77893"/>
        <dbReference type="EC" id="3.5.2.7"/>
    </reaction>
</comment>
<comment type="cofactor">
    <cofactor evidence="1">
        <name>Zn(2+)</name>
        <dbReference type="ChEBI" id="CHEBI:29105"/>
    </cofactor>
    <cofactor evidence="1">
        <name>Fe(3+)</name>
        <dbReference type="ChEBI" id="CHEBI:29034"/>
    </cofactor>
    <text evidence="1">Binds 1 zinc or iron ion per subunit.</text>
</comment>
<comment type="pathway">
    <text evidence="1">Amino-acid degradation; L-histidine degradation into L-glutamate; N-formimidoyl-L-glutamate from L-histidine: step 3/3.</text>
</comment>
<comment type="subcellular location">
    <subcellularLocation>
        <location evidence="1">Cytoplasm</location>
    </subcellularLocation>
</comment>
<comment type="similarity">
    <text evidence="1">Belongs to the metallo-dependent hydrolases superfamily. HutI family.</text>
</comment>
<evidence type="ECO:0000255" key="1">
    <source>
        <dbReference type="HAMAP-Rule" id="MF_00372"/>
    </source>
</evidence>
<accession>B8H2S2</accession>
<organism>
    <name type="scientific">Caulobacter vibrioides (strain NA1000 / CB15N)</name>
    <name type="common">Caulobacter crescentus</name>
    <dbReference type="NCBI Taxonomy" id="565050"/>
    <lineage>
        <taxon>Bacteria</taxon>
        <taxon>Pseudomonadati</taxon>
        <taxon>Pseudomonadota</taxon>
        <taxon>Alphaproteobacteria</taxon>
        <taxon>Caulobacterales</taxon>
        <taxon>Caulobacteraceae</taxon>
        <taxon>Caulobacter</taxon>
    </lineage>
</organism>
<name>HUTI_CAUVN</name>
<proteinExistence type="inferred from homology"/>
<protein>
    <recommendedName>
        <fullName evidence="1">Imidazolonepropionase</fullName>
        <ecNumber evidence="1">3.5.2.7</ecNumber>
    </recommendedName>
    <alternativeName>
        <fullName evidence="1">Imidazolone-5-propionate hydrolase</fullName>
    </alternativeName>
</protein>
<dbReference type="EC" id="3.5.2.7" evidence="1"/>
<dbReference type="EMBL" id="CP001340">
    <property type="protein sequence ID" value="ACL94476.1"/>
    <property type="molecule type" value="Genomic_DNA"/>
</dbReference>
<dbReference type="RefSeq" id="WP_010918844.1">
    <property type="nucleotide sequence ID" value="NC_011916.1"/>
</dbReference>
<dbReference type="RefSeq" id="YP_002516384.1">
    <property type="nucleotide sequence ID" value="NC_011916.1"/>
</dbReference>
<dbReference type="SMR" id="B8H2S2"/>
<dbReference type="GeneID" id="7329759"/>
<dbReference type="KEGG" id="ccs:CCNA_01011"/>
<dbReference type="PATRIC" id="fig|565050.3.peg.993"/>
<dbReference type="HOGENOM" id="CLU_041647_0_0_5"/>
<dbReference type="OrthoDB" id="9776455at2"/>
<dbReference type="PhylomeDB" id="B8H2S2"/>
<dbReference type="UniPathway" id="UPA00379">
    <property type="reaction ID" value="UER00551"/>
</dbReference>
<dbReference type="Proteomes" id="UP000001364">
    <property type="component" value="Chromosome"/>
</dbReference>
<dbReference type="GO" id="GO:0005737">
    <property type="term" value="C:cytoplasm"/>
    <property type="evidence" value="ECO:0007669"/>
    <property type="project" value="UniProtKB-SubCell"/>
</dbReference>
<dbReference type="GO" id="GO:0050480">
    <property type="term" value="F:imidazolonepropionase activity"/>
    <property type="evidence" value="ECO:0007669"/>
    <property type="project" value="UniProtKB-UniRule"/>
</dbReference>
<dbReference type="GO" id="GO:0005506">
    <property type="term" value="F:iron ion binding"/>
    <property type="evidence" value="ECO:0007669"/>
    <property type="project" value="UniProtKB-UniRule"/>
</dbReference>
<dbReference type="GO" id="GO:0008270">
    <property type="term" value="F:zinc ion binding"/>
    <property type="evidence" value="ECO:0007669"/>
    <property type="project" value="UniProtKB-UniRule"/>
</dbReference>
<dbReference type="GO" id="GO:0019556">
    <property type="term" value="P:L-histidine catabolic process to glutamate and formamide"/>
    <property type="evidence" value="ECO:0007669"/>
    <property type="project" value="UniProtKB-UniPathway"/>
</dbReference>
<dbReference type="GO" id="GO:0019557">
    <property type="term" value="P:L-histidine catabolic process to glutamate and formate"/>
    <property type="evidence" value="ECO:0007669"/>
    <property type="project" value="UniProtKB-UniPathway"/>
</dbReference>
<dbReference type="CDD" id="cd01296">
    <property type="entry name" value="Imidazolone-5PH"/>
    <property type="match status" value="1"/>
</dbReference>
<dbReference type="FunFam" id="3.20.20.140:FF:000007">
    <property type="entry name" value="Imidazolonepropionase"/>
    <property type="match status" value="1"/>
</dbReference>
<dbReference type="Gene3D" id="3.20.20.140">
    <property type="entry name" value="Metal-dependent hydrolases"/>
    <property type="match status" value="1"/>
</dbReference>
<dbReference type="Gene3D" id="2.30.40.10">
    <property type="entry name" value="Urease, subunit C, domain 1"/>
    <property type="match status" value="1"/>
</dbReference>
<dbReference type="HAMAP" id="MF_00372">
    <property type="entry name" value="HutI"/>
    <property type="match status" value="1"/>
</dbReference>
<dbReference type="InterPro" id="IPR006680">
    <property type="entry name" value="Amidohydro-rel"/>
</dbReference>
<dbReference type="InterPro" id="IPR005920">
    <property type="entry name" value="HutI"/>
</dbReference>
<dbReference type="InterPro" id="IPR011059">
    <property type="entry name" value="Metal-dep_hydrolase_composite"/>
</dbReference>
<dbReference type="InterPro" id="IPR032466">
    <property type="entry name" value="Metal_Hydrolase"/>
</dbReference>
<dbReference type="NCBIfam" id="TIGR01224">
    <property type="entry name" value="hutI"/>
    <property type="match status" value="1"/>
</dbReference>
<dbReference type="PANTHER" id="PTHR42752">
    <property type="entry name" value="IMIDAZOLONEPROPIONASE"/>
    <property type="match status" value="1"/>
</dbReference>
<dbReference type="PANTHER" id="PTHR42752:SF1">
    <property type="entry name" value="IMIDAZOLONEPROPIONASE-RELATED"/>
    <property type="match status" value="1"/>
</dbReference>
<dbReference type="Pfam" id="PF01979">
    <property type="entry name" value="Amidohydro_1"/>
    <property type="match status" value="1"/>
</dbReference>
<dbReference type="SUPFAM" id="SSF51338">
    <property type="entry name" value="Composite domain of metallo-dependent hydrolases"/>
    <property type="match status" value="1"/>
</dbReference>
<dbReference type="SUPFAM" id="SSF51556">
    <property type="entry name" value="Metallo-dependent hydrolases"/>
    <property type="match status" value="1"/>
</dbReference>
<feature type="chain" id="PRO_1000133882" description="Imidazolonepropionase">
    <location>
        <begin position="1"/>
        <end position="401"/>
    </location>
</feature>
<feature type="binding site" evidence="1">
    <location>
        <position position="70"/>
    </location>
    <ligand>
        <name>Fe(3+)</name>
        <dbReference type="ChEBI" id="CHEBI:29034"/>
    </ligand>
</feature>
<feature type="binding site" evidence="1">
    <location>
        <position position="70"/>
    </location>
    <ligand>
        <name>Zn(2+)</name>
        <dbReference type="ChEBI" id="CHEBI:29105"/>
    </ligand>
</feature>
<feature type="binding site" evidence="1">
    <location>
        <position position="72"/>
    </location>
    <ligand>
        <name>Fe(3+)</name>
        <dbReference type="ChEBI" id="CHEBI:29034"/>
    </ligand>
</feature>
<feature type="binding site" evidence="1">
    <location>
        <position position="72"/>
    </location>
    <ligand>
        <name>Zn(2+)</name>
        <dbReference type="ChEBI" id="CHEBI:29105"/>
    </ligand>
</feature>
<feature type="binding site" evidence="1">
    <location>
        <position position="79"/>
    </location>
    <ligand>
        <name>4-imidazolone-5-propanoate</name>
        <dbReference type="ChEBI" id="CHEBI:77893"/>
    </ligand>
</feature>
<feature type="binding site" evidence="1">
    <location>
        <position position="142"/>
    </location>
    <ligand>
        <name>4-imidazolone-5-propanoate</name>
        <dbReference type="ChEBI" id="CHEBI:77893"/>
    </ligand>
</feature>
<feature type="binding site" evidence="1">
    <location>
        <position position="142"/>
    </location>
    <ligand>
        <name>N-formimidoyl-L-glutamate</name>
        <dbReference type="ChEBI" id="CHEBI:58928"/>
    </ligand>
</feature>
<feature type="binding site" evidence="1">
    <location>
        <position position="175"/>
    </location>
    <ligand>
        <name>4-imidazolone-5-propanoate</name>
        <dbReference type="ChEBI" id="CHEBI:77893"/>
    </ligand>
</feature>
<feature type="binding site" evidence="1">
    <location>
        <position position="240"/>
    </location>
    <ligand>
        <name>Fe(3+)</name>
        <dbReference type="ChEBI" id="CHEBI:29034"/>
    </ligand>
</feature>
<feature type="binding site" evidence="1">
    <location>
        <position position="240"/>
    </location>
    <ligand>
        <name>Zn(2+)</name>
        <dbReference type="ChEBI" id="CHEBI:29105"/>
    </ligand>
</feature>
<feature type="binding site" evidence="1">
    <location>
        <position position="243"/>
    </location>
    <ligand>
        <name>4-imidazolone-5-propanoate</name>
        <dbReference type="ChEBI" id="CHEBI:77893"/>
    </ligand>
</feature>
<feature type="binding site" evidence="1">
    <location>
        <position position="315"/>
    </location>
    <ligand>
        <name>Fe(3+)</name>
        <dbReference type="ChEBI" id="CHEBI:29034"/>
    </ligand>
</feature>
<feature type="binding site" evidence="1">
    <location>
        <position position="315"/>
    </location>
    <ligand>
        <name>Zn(2+)</name>
        <dbReference type="ChEBI" id="CHEBI:29105"/>
    </ligand>
</feature>
<feature type="binding site" evidence="1">
    <location>
        <position position="317"/>
    </location>
    <ligand>
        <name>N-formimidoyl-L-glutamate</name>
        <dbReference type="ChEBI" id="CHEBI:58928"/>
    </ligand>
</feature>
<feature type="binding site" evidence="1">
    <location>
        <position position="319"/>
    </location>
    <ligand>
        <name>N-formimidoyl-L-glutamate</name>
        <dbReference type="ChEBI" id="CHEBI:58928"/>
    </ligand>
</feature>
<feature type="binding site" evidence="1">
    <location>
        <position position="320"/>
    </location>
    <ligand>
        <name>4-imidazolone-5-propanoate</name>
        <dbReference type="ChEBI" id="CHEBI:77893"/>
    </ligand>
</feature>
<keyword id="KW-0963">Cytoplasm</keyword>
<keyword id="KW-0369">Histidine metabolism</keyword>
<keyword id="KW-0378">Hydrolase</keyword>
<keyword id="KW-0408">Iron</keyword>
<keyword id="KW-0479">Metal-binding</keyword>
<keyword id="KW-1185">Reference proteome</keyword>
<keyword id="KW-0862">Zinc</keyword>